<feature type="signal peptide" evidence="2">
    <location>
        <begin position="1"/>
        <end position="20"/>
    </location>
</feature>
<feature type="chain" id="PRO_0000020114" description="Outer membrane protein 41">
    <location>
        <begin position="21"/>
        <end position="391"/>
    </location>
</feature>
<feature type="domain" description="OmpA-like" evidence="1">
    <location>
        <begin position="282"/>
        <end position="391"/>
    </location>
</feature>
<feature type="modified residue" description="Pyrrolidone carboxylic acid" evidence="2">
    <location>
        <position position="21"/>
    </location>
</feature>
<feature type="sequence conflict" description="In Ref. 1; AAD51067." evidence="4" ref="1">
    <original>S</original>
    <variation>R</variation>
    <location>
        <position position="45"/>
    </location>
</feature>
<feature type="sequence conflict" description="In Ref. 1; AAD51067." evidence="4" ref="1">
    <original>I</original>
    <variation>V</variation>
    <location>
        <position position="324"/>
    </location>
</feature>
<dbReference type="EMBL" id="AF175714">
    <property type="protein sequence ID" value="AAD51067.1"/>
    <property type="molecule type" value="Genomic_DNA"/>
</dbReference>
<dbReference type="EMBL" id="AE015924">
    <property type="protein sequence ID" value="AAQ65868.1"/>
    <property type="molecule type" value="Genomic_DNA"/>
</dbReference>
<dbReference type="RefSeq" id="WP_005873612.1">
    <property type="nucleotide sequence ID" value="NC_002950.2"/>
</dbReference>
<dbReference type="SMR" id="Q9S3R9"/>
<dbReference type="STRING" id="242619.PG_0695"/>
<dbReference type="EnsemblBacteria" id="AAQ65868">
    <property type="protein sequence ID" value="AAQ65868"/>
    <property type="gene ID" value="PG_0695"/>
</dbReference>
<dbReference type="KEGG" id="pgi:PG_0695"/>
<dbReference type="eggNOG" id="COG2885">
    <property type="taxonomic scope" value="Bacteria"/>
</dbReference>
<dbReference type="HOGENOM" id="CLU_058370_1_0_10"/>
<dbReference type="Proteomes" id="UP000000588">
    <property type="component" value="Chromosome"/>
</dbReference>
<dbReference type="GO" id="GO:0009279">
    <property type="term" value="C:cell outer membrane"/>
    <property type="evidence" value="ECO:0007669"/>
    <property type="project" value="UniProtKB-SubCell"/>
</dbReference>
<dbReference type="GO" id="GO:0019867">
    <property type="term" value="C:outer membrane"/>
    <property type="evidence" value="ECO:0000314"/>
    <property type="project" value="UniProtKB"/>
</dbReference>
<dbReference type="GO" id="GO:0030247">
    <property type="term" value="F:polysaccharide binding"/>
    <property type="evidence" value="ECO:0000304"/>
    <property type="project" value="UniProtKB"/>
</dbReference>
<dbReference type="GO" id="GO:0015288">
    <property type="term" value="F:porin activity"/>
    <property type="evidence" value="ECO:0000304"/>
    <property type="project" value="UniProtKB"/>
</dbReference>
<dbReference type="CDD" id="cd07185">
    <property type="entry name" value="OmpA_C-like"/>
    <property type="match status" value="1"/>
</dbReference>
<dbReference type="FunFam" id="3.30.1330.60:FF:000006">
    <property type="entry name" value="Outer membrane protein OmpA"/>
    <property type="match status" value="1"/>
</dbReference>
<dbReference type="Gene3D" id="3.30.1330.60">
    <property type="entry name" value="OmpA-like domain"/>
    <property type="match status" value="1"/>
</dbReference>
<dbReference type="InterPro" id="IPR050330">
    <property type="entry name" value="Bact_OuterMem_StrucFunc"/>
</dbReference>
<dbReference type="InterPro" id="IPR006664">
    <property type="entry name" value="OMP_bac"/>
</dbReference>
<dbReference type="InterPro" id="IPR006665">
    <property type="entry name" value="OmpA-like"/>
</dbReference>
<dbReference type="InterPro" id="IPR006690">
    <property type="entry name" value="OMPA-like_CS"/>
</dbReference>
<dbReference type="InterPro" id="IPR036737">
    <property type="entry name" value="OmpA-like_sf"/>
</dbReference>
<dbReference type="PANTHER" id="PTHR30329:SF21">
    <property type="entry name" value="LIPOPROTEIN YIAD-RELATED"/>
    <property type="match status" value="1"/>
</dbReference>
<dbReference type="PANTHER" id="PTHR30329">
    <property type="entry name" value="STATOR ELEMENT OF FLAGELLAR MOTOR COMPLEX"/>
    <property type="match status" value="1"/>
</dbReference>
<dbReference type="Pfam" id="PF00691">
    <property type="entry name" value="OmpA"/>
    <property type="match status" value="1"/>
</dbReference>
<dbReference type="PRINTS" id="PR01021">
    <property type="entry name" value="OMPADOMAIN"/>
</dbReference>
<dbReference type="SUPFAM" id="SSF103088">
    <property type="entry name" value="OmpA-like"/>
    <property type="match status" value="1"/>
</dbReference>
<dbReference type="PROSITE" id="PS01068">
    <property type="entry name" value="OMPA_1"/>
    <property type="match status" value="1"/>
</dbReference>
<dbReference type="PROSITE" id="PS51123">
    <property type="entry name" value="OMPA_2"/>
    <property type="match status" value="1"/>
</dbReference>
<protein>
    <recommendedName>
        <fullName>Outer membrane protein 41</fullName>
        <shortName>Omp41</shortName>
    </recommendedName>
    <alternativeName>
        <fullName>PG32</fullName>
    </alternativeName>
</protein>
<reference evidence="4" key="1">
    <citation type="journal article" date="2001" name="Vaccine">
        <title>Identification of vaccine candidate antigens from a genomic analysis of Porphyromonas gingivalis.</title>
        <authorList>
            <person name="Ross B.C."/>
            <person name="Czajkowski L."/>
            <person name="Hocking D."/>
            <person name="Margetts M."/>
            <person name="Webb E."/>
            <person name="Rothel L."/>
            <person name="Patterson M."/>
            <person name="Agius C."/>
            <person name="Camuglia S."/>
            <person name="Reynolds E.C."/>
            <person name="Littlejohn T."/>
            <person name="Gaeta B."/>
            <person name="Ng A."/>
            <person name="Kuczek E.S."/>
            <person name="Mattick J.S."/>
            <person name="Gearing D.P."/>
            <person name="Barr I.G."/>
        </authorList>
    </citation>
    <scope>NUCLEOTIDE SEQUENCE [GENOMIC DNA]</scope>
    <source>
        <strain>ATCC 53978 / W50</strain>
    </source>
</reference>
<reference key="2">
    <citation type="journal article" date="2003" name="J. Bacteriol.">
        <title>Complete genome sequence of the oral pathogenic bacterium Porphyromonas gingivalis strain W83.</title>
        <authorList>
            <person name="Nelson K.E."/>
            <person name="Fleischmann R.D."/>
            <person name="DeBoy R.T."/>
            <person name="Paulsen I.T."/>
            <person name="Fouts D.E."/>
            <person name="Eisen J.A."/>
            <person name="Daugherty S.C."/>
            <person name="Dodson R.J."/>
            <person name="Durkin A.S."/>
            <person name="Gwinn M.L."/>
            <person name="Haft D.H."/>
            <person name="Kolonay J.F."/>
            <person name="Nelson W.C."/>
            <person name="Mason T.M."/>
            <person name="Tallon L."/>
            <person name="Gray J."/>
            <person name="Granger D."/>
            <person name="Tettelin H."/>
            <person name="Dong H."/>
            <person name="Galvin J.L."/>
            <person name="Duncan M.J."/>
            <person name="Dewhirst F.E."/>
            <person name="Fraser C.M."/>
        </authorList>
    </citation>
    <scope>NUCLEOTIDE SEQUENCE [LARGE SCALE GENOMIC DNA]</scope>
    <source>
        <strain>ATCC BAA-308 / W83</strain>
    </source>
</reference>
<reference evidence="4" key="3">
    <citation type="journal article" date="2001" name="Eur. J. Biochem.">
        <title>Identification of a novel heterodimeric outer membrane protein of Porphyromonas gingivalis by two-dimensional gel electrophoresis and peptide mass fingerprinting.</title>
        <authorList>
            <person name="Veith P.D."/>
            <person name="Talbo G.H."/>
            <person name="Slakeski N."/>
            <person name="Reynolds E.C."/>
        </authorList>
    </citation>
    <scope>PROTEIN SEQUENCE OF 21-391</scope>
    <scope>PYROGLUTAMATE FORMATION AT GLN-21</scope>
    <source>
        <strain>ATCC 53978 / W50</strain>
    </source>
</reference>
<accession>Q9S3R9</accession>
<comment type="function">
    <text evidence="3">May have porin activity and function in peptidoglycan binding.</text>
</comment>
<comment type="subunit">
    <text>Disulfide-linked heterodimer with Omp40.</text>
</comment>
<comment type="subcellular location">
    <subcellularLocation>
        <location evidence="4">Cell outer membrane</location>
        <topology evidence="4">Multi-pass membrane protein</topology>
    </subcellularLocation>
</comment>
<comment type="similarity">
    <text evidence="4">Belongs to the outer membrane OOP (TC 1.B.6) superfamily.</text>
</comment>
<organism>
    <name type="scientific">Porphyromonas gingivalis (strain ATCC BAA-308 / W83)</name>
    <dbReference type="NCBI Taxonomy" id="242619"/>
    <lineage>
        <taxon>Bacteria</taxon>
        <taxon>Pseudomonadati</taxon>
        <taxon>Bacteroidota</taxon>
        <taxon>Bacteroidia</taxon>
        <taxon>Bacteroidales</taxon>
        <taxon>Porphyromonadaceae</taxon>
        <taxon>Porphyromonas</taxon>
    </lineage>
</organism>
<gene>
    <name type="ordered locus">PG_0695</name>
</gene>
<proteinExistence type="evidence at protein level"/>
<evidence type="ECO:0000255" key="1">
    <source>
        <dbReference type="PROSITE-ProRule" id="PRU00473"/>
    </source>
</evidence>
<evidence type="ECO:0000269" key="2">
    <source>
    </source>
</evidence>
<evidence type="ECO:0000303" key="3">
    <source>
    </source>
</evidence>
<evidence type="ECO:0000305" key="4"/>
<keyword id="KW-0998">Cell outer membrane</keyword>
<keyword id="KW-0903">Direct protein sequencing</keyword>
<keyword id="KW-1015">Disulfide bond</keyword>
<keyword id="KW-0472">Membrane</keyword>
<keyword id="KW-0873">Pyrrolidone carboxylic acid</keyword>
<keyword id="KW-1185">Reference proteome</keyword>
<keyword id="KW-0732">Signal</keyword>
<keyword id="KW-0812">Transmembrane</keyword>
<keyword id="KW-1134">Transmembrane beta strand</keyword>
<name>OMP41_PORGI</name>
<sequence>MKVKYLMLTLVGAIALNASAQENTVPATGQLPAKNVAFARNKAGSNWFVTLQGGVAAQFLNDNNNKDLMDRLGAIGSLSVGKYHSPFFATRLQINGGQAHTFLGKNGEQEINTNFGAAHFDFMFDVVNYFAPYRENRFFHLIPWVGVGYQHKFIGSEWSKDNVESLTANVGVMMAFRLGKRVDFVIEAQAAHSNLNLSRAYNAKKTPVFEDPAGRYYNGFQGMATAGLNFRLGAVGFNAIEPMDYALINDLNGQINRLRSEVEELSKRPVSCPECPEVTPVTKTENILTEKAVLFRFDSHVVDKDQLINLYDVAQFVKETNEPITVVGYADPTGNTQYNEKLSERRAKAVVDVLTGKYGVPSELISVEWKGDSTQPFSKKAWNRVVIVRSK</sequence>